<dbReference type="EMBL" id="AF197563">
    <property type="protein sequence ID" value="AAF13250.1"/>
    <property type="molecule type" value="mRNA"/>
</dbReference>
<dbReference type="SMR" id="Q9PUB7"/>
<dbReference type="GO" id="GO:0005576">
    <property type="term" value="C:extracellular region"/>
    <property type="evidence" value="ECO:0007669"/>
    <property type="project" value="UniProtKB-SubCell"/>
</dbReference>
<dbReference type="GO" id="GO:0090729">
    <property type="term" value="F:toxin activity"/>
    <property type="evidence" value="ECO:0007669"/>
    <property type="project" value="UniProtKB-KW"/>
</dbReference>
<dbReference type="CDD" id="cd00206">
    <property type="entry name" value="TFP_snake_toxin"/>
    <property type="match status" value="1"/>
</dbReference>
<dbReference type="Gene3D" id="2.10.60.10">
    <property type="entry name" value="CD59"/>
    <property type="match status" value="1"/>
</dbReference>
<dbReference type="InterPro" id="IPR003571">
    <property type="entry name" value="Snake_3FTx"/>
</dbReference>
<dbReference type="InterPro" id="IPR045860">
    <property type="entry name" value="Snake_toxin-like_sf"/>
</dbReference>
<dbReference type="InterPro" id="IPR018354">
    <property type="entry name" value="Snake_toxin_con_site"/>
</dbReference>
<dbReference type="InterPro" id="IPR054131">
    <property type="entry name" value="Toxin_cobra-type"/>
</dbReference>
<dbReference type="Pfam" id="PF21947">
    <property type="entry name" value="Toxin_cobra-type"/>
    <property type="match status" value="1"/>
</dbReference>
<dbReference type="SUPFAM" id="SSF57302">
    <property type="entry name" value="Snake toxin-like"/>
    <property type="match status" value="1"/>
</dbReference>
<dbReference type="PROSITE" id="PS00272">
    <property type="entry name" value="SNAKE_TOXIN"/>
    <property type="match status" value="1"/>
</dbReference>
<protein>
    <recommendedName>
        <fullName>Alpha-neurotoxin homolog 1</fullName>
        <shortName>NXH1</shortName>
    </recommendedName>
</protein>
<reference key="1">
    <citation type="journal article" date="1995" name="J. Toxicol. Toxin Rev.">
        <title>Reverse biology applied to Micrurus corallinus, a South American coral snake.</title>
        <authorList>
            <person name="Ho P.L."/>
            <person name="Soares M.B."/>
            <person name="Yamane T."/>
            <person name="Raw I."/>
        </authorList>
    </citation>
    <scope>NUCLEOTIDE SEQUENCE [MRNA]</scope>
    <source>
        <tissue>Venom gland</tissue>
    </source>
</reference>
<reference key="2">
    <citation type="journal article" date="2000" name="Biochem. Biophys. Res. Commun.">
        <title>Cloning and characterization of an alpha-neurotoxin-type protein specific for the coral snake Micrurus corallinus.</title>
        <authorList>
            <person name="Silveira de Oliveira J."/>
            <person name="Rossan de Brandao Prieto da Silva A."/>
            <person name="Soares M.B."/>
            <person name="Stephano M.A."/>
            <person name="de Oliveira Dias W."/>
            <person name="Raw I."/>
            <person name="Ho P.L."/>
        </authorList>
    </citation>
    <scope>NUCLEOTIDE SEQUENCE [MRNA]</scope>
    <source>
        <tissue>Venom gland</tissue>
    </source>
</reference>
<reference key="3">
    <citation type="journal article" date="2011" name="J. Proteomics">
        <title>Snake venomics and venom gland transcriptomic analysis of Brazilian coral snakes, Micrurus altirostris and M. corallinus.</title>
        <authorList>
            <person name="Correa-Netto C."/>
            <person name="Junqueira-de-Azevedo Ide L."/>
            <person name="Silva D.A."/>
            <person name="Ho P.L."/>
            <person name="Leitao-de-Araujo M."/>
            <person name="Alves M.L."/>
            <person name="Sanz L."/>
            <person name="Foguel D."/>
            <person name="Zingali R.B."/>
            <person name="Calvete J.J."/>
        </authorList>
    </citation>
    <scope>PROTEIN SEQUENCE OF 22-36</scope>
    <scope>SUBCELLULAR LOCATION</scope>
    <source>
        <tissue>Venom</tissue>
    </source>
</reference>
<proteinExistence type="evidence at protein level"/>
<accession>Q9PUB7</accession>
<keyword id="KW-0903">Direct protein sequencing</keyword>
<keyword id="KW-1015">Disulfide bond</keyword>
<keyword id="KW-0964">Secreted</keyword>
<keyword id="KW-0732">Signal</keyword>
<keyword id="KW-0800">Toxin</keyword>
<sequence>MKTLLLTLVVVTIVCLDFGYTIVCYKRHASDSQTTTCLSGICYKKITRGISRPEMGCGCPQSSRGVKVECCMRDKCNG</sequence>
<name>3SOC1_MICCO</name>
<comment type="subcellular location">
    <subcellularLocation>
        <location evidence="2">Secreted</location>
    </subcellularLocation>
</comment>
<comment type="tissue specificity">
    <text evidence="3">Expressed by the venom gland.</text>
</comment>
<comment type="similarity">
    <text evidence="3">Belongs to the three-finger toxin family. Short-chain subfamily. Orphan group XII sub-subfamily.</text>
</comment>
<evidence type="ECO:0000250" key="1">
    <source>
        <dbReference type="UniProtKB" id="P01414"/>
    </source>
</evidence>
<evidence type="ECO:0000269" key="2">
    <source>
    </source>
</evidence>
<evidence type="ECO:0000305" key="3"/>
<evidence type="ECO:0000305" key="4">
    <source>
    </source>
</evidence>
<organism>
    <name type="scientific">Micrurus corallinus</name>
    <name type="common">Brazilian coral snake</name>
    <dbReference type="NCBI Taxonomy" id="54390"/>
    <lineage>
        <taxon>Eukaryota</taxon>
        <taxon>Metazoa</taxon>
        <taxon>Chordata</taxon>
        <taxon>Craniata</taxon>
        <taxon>Vertebrata</taxon>
        <taxon>Euteleostomi</taxon>
        <taxon>Lepidosauria</taxon>
        <taxon>Squamata</taxon>
        <taxon>Bifurcata</taxon>
        <taxon>Unidentata</taxon>
        <taxon>Episquamata</taxon>
        <taxon>Toxicofera</taxon>
        <taxon>Serpentes</taxon>
        <taxon>Colubroidea</taxon>
        <taxon>Elapidae</taxon>
        <taxon>Elapinae</taxon>
        <taxon>Micrurus</taxon>
    </lineage>
</organism>
<feature type="signal peptide" evidence="2">
    <location>
        <begin position="1"/>
        <end position="21"/>
    </location>
</feature>
<feature type="chain" id="PRO_0000035449" description="Alpha-neurotoxin homolog 1" evidence="4">
    <location>
        <begin position="22"/>
        <end position="78"/>
    </location>
</feature>
<feature type="disulfide bond" evidence="1">
    <location>
        <begin position="24"/>
        <end position="42"/>
    </location>
</feature>
<feature type="disulfide bond" evidence="1">
    <location>
        <begin position="37"/>
        <end position="57"/>
    </location>
</feature>
<feature type="disulfide bond" evidence="1">
    <location>
        <begin position="59"/>
        <end position="70"/>
    </location>
</feature>
<feature type="disulfide bond" evidence="1">
    <location>
        <begin position="71"/>
        <end position="76"/>
    </location>
</feature>